<feature type="chain" id="PRO_1000127544" description="D-aminoacyl-tRNA deacylase">
    <location>
        <begin position="1"/>
        <end position="145"/>
    </location>
</feature>
<feature type="short sequence motif" description="Gly-cisPro motif, important for rejection of L-amino acids" evidence="1">
    <location>
        <begin position="137"/>
        <end position="138"/>
    </location>
</feature>
<name>DTD_KLEP3</name>
<proteinExistence type="inferred from homology"/>
<comment type="function">
    <text evidence="1">An aminoacyl-tRNA editing enzyme that deacylates mischarged D-aminoacyl-tRNAs. Also deacylates mischarged glycyl-tRNA(Ala), protecting cells against glycine mischarging by AlaRS. Acts via tRNA-based rather than protein-based catalysis; rejects L-amino acids rather than detecting D-amino acids in the active site. By recycling D-aminoacyl-tRNA to D-amino acids and free tRNA molecules, this enzyme counteracts the toxicity associated with the formation of D-aminoacyl-tRNA entities in vivo and helps enforce protein L-homochirality.</text>
</comment>
<comment type="catalytic activity">
    <reaction evidence="1">
        <text>glycyl-tRNA(Ala) + H2O = tRNA(Ala) + glycine + H(+)</text>
        <dbReference type="Rhea" id="RHEA:53744"/>
        <dbReference type="Rhea" id="RHEA-COMP:9657"/>
        <dbReference type="Rhea" id="RHEA-COMP:13640"/>
        <dbReference type="ChEBI" id="CHEBI:15377"/>
        <dbReference type="ChEBI" id="CHEBI:15378"/>
        <dbReference type="ChEBI" id="CHEBI:57305"/>
        <dbReference type="ChEBI" id="CHEBI:78442"/>
        <dbReference type="ChEBI" id="CHEBI:78522"/>
        <dbReference type="EC" id="3.1.1.96"/>
    </reaction>
</comment>
<comment type="catalytic activity">
    <reaction evidence="1">
        <text>a D-aminoacyl-tRNA + H2O = a tRNA + a D-alpha-amino acid + H(+)</text>
        <dbReference type="Rhea" id="RHEA:13953"/>
        <dbReference type="Rhea" id="RHEA-COMP:10123"/>
        <dbReference type="Rhea" id="RHEA-COMP:10124"/>
        <dbReference type="ChEBI" id="CHEBI:15377"/>
        <dbReference type="ChEBI" id="CHEBI:15378"/>
        <dbReference type="ChEBI" id="CHEBI:59871"/>
        <dbReference type="ChEBI" id="CHEBI:78442"/>
        <dbReference type="ChEBI" id="CHEBI:79333"/>
        <dbReference type="EC" id="3.1.1.96"/>
    </reaction>
</comment>
<comment type="subunit">
    <text evidence="1">Homodimer.</text>
</comment>
<comment type="subcellular location">
    <subcellularLocation>
        <location evidence="1">Cytoplasm</location>
    </subcellularLocation>
</comment>
<comment type="domain">
    <text evidence="1">A Gly-cisPro motif from one monomer fits into the active site of the other monomer to allow specific chiral rejection of L-amino acids.</text>
</comment>
<comment type="similarity">
    <text evidence="1">Belongs to the DTD family.</text>
</comment>
<keyword id="KW-0963">Cytoplasm</keyword>
<keyword id="KW-0378">Hydrolase</keyword>
<keyword id="KW-0694">RNA-binding</keyword>
<keyword id="KW-0820">tRNA-binding</keyword>
<evidence type="ECO:0000255" key="1">
    <source>
        <dbReference type="HAMAP-Rule" id="MF_00518"/>
    </source>
</evidence>
<sequence>MIALIQRVSRASVTVEDEVTGEIGPGLLVLLGVEKDDDEQKANRLCERVLGYRIFSDAEGKMNLNVQQAGGSVLVVSQFTLAADTERGMRPSFSKGAAPDRAEALYEYFVARCRQQEMNTQTGRFAADMQVSLVNDGPVTFWLQV</sequence>
<dbReference type="EC" id="3.1.1.96" evidence="1"/>
<dbReference type="EMBL" id="CP000964">
    <property type="protein sequence ID" value="ACI09478.1"/>
    <property type="molecule type" value="Genomic_DNA"/>
</dbReference>
<dbReference type="SMR" id="B5XZI4"/>
<dbReference type="KEGG" id="kpe:KPK_5500"/>
<dbReference type="HOGENOM" id="CLU_076901_1_0_6"/>
<dbReference type="Proteomes" id="UP000001734">
    <property type="component" value="Chromosome"/>
</dbReference>
<dbReference type="GO" id="GO:0005737">
    <property type="term" value="C:cytoplasm"/>
    <property type="evidence" value="ECO:0007669"/>
    <property type="project" value="UniProtKB-SubCell"/>
</dbReference>
<dbReference type="GO" id="GO:0051500">
    <property type="term" value="F:D-tyrosyl-tRNA(Tyr) deacylase activity"/>
    <property type="evidence" value="ECO:0007669"/>
    <property type="project" value="TreeGrafter"/>
</dbReference>
<dbReference type="GO" id="GO:0106026">
    <property type="term" value="F:Gly-tRNA(Ala) deacylase activity"/>
    <property type="evidence" value="ECO:0007669"/>
    <property type="project" value="UniProtKB-UniRule"/>
</dbReference>
<dbReference type="GO" id="GO:0043908">
    <property type="term" value="F:Ser(Gly)-tRNA(Ala) hydrolase activity"/>
    <property type="evidence" value="ECO:0007669"/>
    <property type="project" value="UniProtKB-UniRule"/>
</dbReference>
<dbReference type="GO" id="GO:0000049">
    <property type="term" value="F:tRNA binding"/>
    <property type="evidence" value="ECO:0007669"/>
    <property type="project" value="UniProtKB-UniRule"/>
</dbReference>
<dbReference type="GO" id="GO:0019478">
    <property type="term" value="P:D-amino acid catabolic process"/>
    <property type="evidence" value="ECO:0007669"/>
    <property type="project" value="UniProtKB-UniRule"/>
</dbReference>
<dbReference type="CDD" id="cd00563">
    <property type="entry name" value="Dtyr_deacylase"/>
    <property type="match status" value="1"/>
</dbReference>
<dbReference type="FunFam" id="3.50.80.10:FF:000001">
    <property type="entry name" value="D-aminoacyl-tRNA deacylase"/>
    <property type="match status" value="1"/>
</dbReference>
<dbReference type="Gene3D" id="3.50.80.10">
    <property type="entry name" value="D-tyrosyl-tRNA(Tyr) deacylase"/>
    <property type="match status" value="1"/>
</dbReference>
<dbReference type="HAMAP" id="MF_00518">
    <property type="entry name" value="Deacylase_Dtd"/>
    <property type="match status" value="1"/>
</dbReference>
<dbReference type="InterPro" id="IPR003732">
    <property type="entry name" value="Daa-tRNA_deacyls_DTD"/>
</dbReference>
<dbReference type="InterPro" id="IPR023509">
    <property type="entry name" value="DTD-like_sf"/>
</dbReference>
<dbReference type="NCBIfam" id="TIGR00256">
    <property type="entry name" value="D-aminoacyl-tRNA deacylase"/>
    <property type="match status" value="1"/>
</dbReference>
<dbReference type="PANTHER" id="PTHR10472:SF5">
    <property type="entry name" value="D-AMINOACYL-TRNA DEACYLASE 1"/>
    <property type="match status" value="1"/>
</dbReference>
<dbReference type="PANTHER" id="PTHR10472">
    <property type="entry name" value="D-TYROSYL-TRNA TYR DEACYLASE"/>
    <property type="match status" value="1"/>
</dbReference>
<dbReference type="Pfam" id="PF02580">
    <property type="entry name" value="Tyr_Deacylase"/>
    <property type="match status" value="1"/>
</dbReference>
<dbReference type="SUPFAM" id="SSF69500">
    <property type="entry name" value="DTD-like"/>
    <property type="match status" value="1"/>
</dbReference>
<gene>
    <name evidence="1" type="primary">dtd</name>
    <name type="ordered locus">KPK_5500</name>
</gene>
<organism>
    <name type="scientific">Klebsiella pneumoniae (strain 342)</name>
    <dbReference type="NCBI Taxonomy" id="507522"/>
    <lineage>
        <taxon>Bacteria</taxon>
        <taxon>Pseudomonadati</taxon>
        <taxon>Pseudomonadota</taxon>
        <taxon>Gammaproteobacteria</taxon>
        <taxon>Enterobacterales</taxon>
        <taxon>Enterobacteriaceae</taxon>
        <taxon>Klebsiella/Raoultella group</taxon>
        <taxon>Klebsiella</taxon>
        <taxon>Klebsiella pneumoniae complex</taxon>
    </lineage>
</organism>
<accession>B5XZI4</accession>
<protein>
    <recommendedName>
        <fullName evidence="1">D-aminoacyl-tRNA deacylase</fullName>
        <shortName evidence="1">DTD</shortName>
        <ecNumber evidence="1">3.1.1.96</ecNumber>
    </recommendedName>
    <alternativeName>
        <fullName evidence="1">Gly-tRNA(Ala) deacylase</fullName>
    </alternativeName>
</protein>
<reference key="1">
    <citation type="journal article" date="2008" name="PLoS Genet.">
        <title>Complete genome sequence of the N2-fixing broad host range endophyte Klebsiella pneumoniae 342 and virulence predictions verified in mice.</title>
        <authorList>
            <person name="Fouts D.E."/>
            <person name="Tyler H.L."/>
            <person name="DeBoy R.T."/>
            <person name="Daugherty S."/>
            <person name="Ren Q."/>
            <person name="Badger J.H."/>
            <person name="Durkin A.S."/>
            <person name="Huot H."/>
            <person name="Shrivastava S."/>
            <person name="Kothari S."/>
            <person name="Dodson R.J."/>
            <person name="Mohamoud Y."/>
            <person name="Khouri H."/>
            <person name="Roesch L.F.W."/>
            <person name="Krogfelt K.A."/>
            <person name="Struve C."/>
            <person name="Triplett E.W."/>
            <person name="Methe B.A."/>
        </authorList>
    </citation>
    <scope>NUCLEOTIDE SEQUENCE [LARGE SCALE GENOMIC DNA]</scope>
    <source>
        <strain>342</strain>
    </source>
</reference>